<proteinExistence type="inferred from homology"/>
<gene>
    <name evidence="1" type="primary">kmo</name>
    <name type="ordered locus">GFO_2711</name>
</gene>
<reference key="1">
    <citation type="journal article" date="2006" name="Environ. Microbiol.">
        <title>Whole genome analysis of the marine Bacteroidetes'Gramella forsetii' reveals adaptations to degradation of polymeric organic matter.</title>
        <authorList>
            <person name="Bauer M."/>
            <person name="Kube M."/>
            <person name="Teeling H."/>
            <person name="Richter M."/>
            <person name="Lombardot T."/>
            <person name="Allers E."/>
            <person name="Wuerdemann C.A."/>
            <person name="Quast C."/>
            <person name="Kuhl H."/>
            <person name="Knaust F."/>
            <person name="Woebken D."/>
            <person name="Bischof K."/>
            <person name="Mussmann M."/>
            <person name="Choudhuri J.V."/>
            <person name="Meyer F."/>
            <person name="Reinhardt R."/>
            <person name="Amann R.I."/>
            <person name="Gloeckner F.O."/>
        </authorList>
    </citation>
    <scope>NUCLEOTIDE SEQUENCE [LARGE SCALE GENOMIC DNA]</scope>
    <source>
        <strain>DSM 17595 / CGMCC 1.15422 / KT0803</strain>
    </source>
</reference>
<dbReference type="EC" id="1.14.13.9" evidence="1"/>
<dbReference type="EMBL" id="CU207366">
    <property type="protein sequence ID" value="CAL67667.1"/>
    <property type="status" value="ALT_INIT"/>
    <property type="molecule type" value="Genomic_DNA"/>
</dbReference>
<dbReference type="RefSeq" id="WP_041250130.1">
    <property type="nucleotide sequence ID" value="NC_008571.1"/>
</dbReference>
<dbReference type="SMR" id="A0M4X2"/>
<dbReference type="STRING" id="411154.GFO_2711"/>
<dbReference type="KEGG" id="gfo:GFO_2711"/>
<dbReference type="eggNOG" id="COG0654">
    <property type="taxonomic scope" value="Bacteria"/>
</dbReference>
<dbReference type="HOGENOM" id="CLU_023210_0_1_10"/>
<dbReference type="OrthoDB" id="9766816at2"/>
<dbReference type="UniPathway" id="UPA00253">
    <property type="reaction ID" value="UER00328"/>
</dbReference>
<dbReference type="Proteomes" id="UP000000755">
    <property type="component" value="Chromosome"/>
</dbReference>
<dbReference type="GO" id="GO:0071949">
    <property type="term" value="F:FAD binding"/>
    <property type="evidence" value="ECO:0007669"/>
    <property type="project" value="InterPro"/>
</dbReference>
<dbReference type="GO" id="GO:0004502">
    <property type="term" value="F:kynurenine 3-monooxygenase activity"/>
    <property type="evidence" value="ECO:0007669"/>
    <property type="project" value="UniProtKB-UniRule"/>
</dbReference>
<dbReference type="GO" id="GO:0043420">
    <property type="term" value="P:anthranilate metabolic process"/>
    <property type="evidence" value="ECO:0007669"/>
    <property type="project" value="UniProtKB-UniRule"/>
</dbReference>
<dbReference type="GO" id="GO:0070189">
    <property type="term" value="P:kynurenine metabolic process"/>
    <property type="evidence" value="ECO:0007669"/>
    <property type="project" value="TreeGrafter"/>
</dbReference>
<dbReference type="GO" id="GO:0006569">
    <property type="term" value="P:L-tryptophan catabolic process"/>
    <property type="evidence" value="ECO:0007669"/>
    <property type="project" value="UniProtKB-UniRule"/>
</dbReference>
<dbReference type="GO" id="GO:0009435">
    <property type="term" value="P:NAD biosynthetic process"/>
    <property type="evidence" value="ECO:0007669"/>
    <property type="project" value="UniProtKB-UniPathway"/>
</dbReference>
<dbReference type="GO" id="GO:0019805">
    <property type="term" value="P:quinolinate biosynthetic process"/>
    <property type="evidence" value="ECO:0007669"/>
    <property type="project" value="UniProtKB-UniRule"/>
</dbReference>
<dbReference type="FunFam" id="3.50.50.60:FF:000185">
    <property type="entry name" value="Kynurenine 3-monooxygenase"/>
    <property type="match status" value="1"/>
</dbReference>
<dbReference type="Gene3D" id="3.50.50.60">
    <property type="entry name" value="FAD/NAD(P)-binding domain"/>
    <property type="match status" value="1"/>
</dbReference>
<dbReference type="HAMAP" id="MF_01971">
    <property type="entry name" value="Kynurenine_monooxygenase"/>
    <property type="match status" value="1"/>
</dbReference>
<dbReference type="InterPro" id="IPR002938">
    <property type="entry name" value="FAD-bd"/>
</dbReference>
<dbReference type="InterPro" id="IPR036188">
    <property type="entry name" value="FAD/NAD-bd_sf"/>
</dbReference>
<dbReference type="InterPro" id="IPR027545">
    <property type="entry name" value="Kynurenine_monooxygenase"/>
</dbReference>
<dbReference type="PANTHER" id="PTHR46028">
    <property type="entry name" value="KYNURENINE 3-MONOOXYGENASE"/>
    <property type="match status" value="1"/>
</dbReference>
<dbReference type="PANTHER" id="PTHR46028:SF2">
    <property type="entry name" value="KYNURENINE 3-MONOOXYGENASE"/>
    <property type="match status" value="1"/>
</dbReference>
<dbReference type="Pfam" id="PF01494">
    <property type="entry name" value="FAD_binding_3"/>
    <property type="match status" value="1"/>
</dbReference>
<dbReference type="PRINTS" id="PR00420">
    <property type="entry name" value="RNGMNOXGNASE"/>
</dbReference>
<dbReference type="SUPFAM" id="SSF51905">
    <property type="entry name" value="FAD/NAD(P)-binding domain"/>
    <property type="match status" value="1"/>
</dbReference>
<feature type="chain" id="PRO_0000361938" description="Kynurenine 3-monooxygenase">
    <location>
        <begin position="1"/>
        <end position="447"/>
    </location>
</feature>
<keyword id="KW-0274">FAD</keyword>
<keyword id="KW-0285">Flavoprotein</keyword>
<keyword id="KW-0503">Monooxygenase</keyword>
<keyword id="KW-0521">NADP</keyword>
<keyword id="KW-0560">Oxidoreductase</keyword>
<keyword id="KW-0662">Pyridine nucleotide biosynthesis</keyword>
<accession>A0M4X2</accession>
<evidence type="ECO:0000255" key="1">
    <source>
        <dbReference type="HAMAP-Rule" id="MF_01971"/>
    </source>
</evidence>
<evidence type="ECO:0000305" key="2"/>
<organism>
    <name type="scientific">Christiangramia forsetii (strain DSM 17595 / CGMCC 1.15422 / KT0803)</name>
    <name type="common">Gramella forsetii</name>
    <dbReference type="NCBI Taxonomy" id="411154"/>
    <lineage>
        <taxon>Bacteria</taxon>
        <taxon>Pseudomonadati</taxon>
        <taxon>Bacteroidota</taxon>
        <taxon>Flavobacteriia</taxon>
        <taxon>Flavobacteriales</taxon>
        <taxon>Flavobacteriaceae</taxon>
        <taxon>Christiangramia</taxon>
    </lineage>
</organism>
<name>KMO_CHRFK</name>
<comment type="function">
    <text evidence="1">Catalyzes the hydroxylation of L-kynurenine (L-Kyn) to form 3-hydroxy-L-kynurenine (L-3OHKyn). Required for synthesis of quinolinic acid.</text>
</comment>
<comment type="catalytic activity">
    <reaction evidence="1">
        <text>L-kynurenine + NADPH + O2 + H(+) = 3-hydroxy-L-kynurenine + NADP(+) + H2O</text>
        <dbReference type="Rhea" id="RHEA:20545"/>
        <dbReference type="ChEBI" id="CHEBI:15377"/>
        <dbReference type="ChEBI" id="CHEBI:15378"/>
        <dbReference type="ChEBI" id="CHEBI:15379"/>
        <dbReference type="ChEBI" id="CHEBI:57783"/>
        <dbReference type="ChEBI" id="CHEBI:57959"/>
        <dbReference type="ChEBI" id="CHEBI:58125"/>
        <dbReference type="ChEBI" id="CHEBI:58349"/>
        <dbReference type="EC" id="1.14.13.9"/>
    </reaction>
</comment>
<comment type="cofactor">
    <cofactor evidence="1">
        <name>FAD</name>
        <dbReference type="ChEBI" id="CHEBI:57692"/>
    </cofactor>
</comment>
<comment type="pathway">
    <text evidence="1">Cofactor biosynthesis; NAD(+) biosynthesis; quinolinate from L-kynurenine: step 1/3.</text>
</comment>
<comment type="similarity">
    <text evidence="1">Belongs to the aromatic-ring hydroxylase family. KMO subfamily.</text>
</comment>
<comment type="sequence caution" evidence="2">
    <conflict type="erroneous initiation">
        <sequence resource="EMBL-CDS" id="CAL67667"/>
    </conflict>
</comment>
<protein>
    <recommendedName>
        <fullName evidence="1">Kynurenine 3-monooxygenase</fullName>
        <ecNumber evidence="1">1.14.13.9</ecNumber>
    </recommendedName>
    <alternativeName>
        <fullName evidence="1">Kynurenine 3-hydroxylase</fullName>
    </alternativeName>
</protein>
<sequence>MQKEKDVAIVGSGLVGSLLAIFLRKQGHKVTVFDRRPDVRNVQFSGRSINLAMSNRGWKALREAGIEDEIRELALPLDKRAMHVEGQSVYFQKYGEEGEAIYSISRGILNRKMIDLAESAGATFRFEEKIWDVDMKEARLYTGESEKSVWKEYQFDLIFGADGAFSRVRHKMQRQSRFNYSQHFIDVGYKELTILANEDGSHKMDNSSFHIWPRGNFMLIAMPNLDGTFTCTLFMPFDGETSFESIKTEDEADIFFEKYFPDIKDEISNLKKDFFKNPTSAMVTIKCFPWSYFDKITLVGDSAHAIVPFYGQGMNAGFEDISVLNEKMNLYGDDWEKVFEDYQTERKPNADAIAELSYRNFVEMSKKTADPKFLLRKKIEQKFAENHPDLWTPLYSRVTFSDKAYSDALKIGDYQREIMDEVMKIPGIEEKWESSEVEEKIISLIKK</sequence>